<keyword id="KW-0067">ATP-binding</keyword>
<keyword id="KW-1003">Cell membrane</keyword>
<keyword id="KW-0418">Kinase</keyword>
<keyword id="KW-0449">Lipoprotein</keyword>
<keyword id="KW-0472">Membrane</keyword>
<keyword id="KW-0519">Myristate</keyword>
<keyword id="KW-0547">Nucleotide-binding</keyword>
<keyword id="KW-0564">Palmitate</keyword>
<keyword id="KW-0597">Phosphoprotein</keyword>
<keyword id="KW-0611">Plant defense</keyword>
<keyword id="KW-1185">Reference proteome</keyword>
<keyword id="KW-0723">Serine/threonine-protein kinase</keyword>
<keyword id="KW-0808">Transferase</keyword>
<organism>
    <name type="scientific">Arabidopsis thaliana</name>
    <name type="common">Mouse-ear cress</name>
    <dbReference type="NCBI Taxonomy" id="3702"/>
    <lineage>
        <taxon>Eukaryota</taxon>
        <taxon>Viridiplantae</taxon>
        <taxon>Streptophyta</taxon>
        <taxon>Embryophyta</taxon>
        <taxon>Tracheophyta</taxon>
        <taxon>Spermatophyta</taxon>
        <taxon>Magnoliopsida</taxon>
        <taxon>eudicotyledons</taxon>
        <taxon>Gunneridae</taxon>
        <taxon>Pentapetalae</taxon>
        <taxon>rosids</taxon>
        <taxon>malvids</taxon>
        <taxon>Brassicales</taxon>
        <taxon>Brassicaceae</taxon>
        <taxon>Camelineae</taxon>
        <taxon>Arabidopsis</taxon>
    </lineage>
</organism>
<dbReference type="EC" id="2.7.11.1" evidence="7"/>
<dbReference type="EMBL" id="AC006587">
    <property type="protein sequence ID" value="AAM15298.1"/>
    <property type="molecule type" value="Genomic_DNA"/>
</dbReference>
<dbReference type="EMBL" id="AC007171">
    <property type="protein sequence ID" value="AAD24376.1"/>
    <property type="molecule type" value="Genomic_DNA"/>
</dbReference>
<dbReference type="EMBL" id="CP002685">
    <property type="protein sequence ID" value="AEC08146.1"/>
    <property type="molecule type" value="Genomic_DNA"/>
</dbReference>
<dbReference type="EMBL" id="BT029736">
    <property type="protein sequence ID" value="ABM06006.1"/>
    <property type="molecule type" value="mRNA"/>
</dbReference>
<dbReference type="EMBL" id="X86959">
    <property type="protein sequence ID" value="CAA60522.1"/>
    <property type="molecule type" value="Genomic_DNA"/>
</dbReference>
<dbReference type="PIR" id="G84686">
    <property type="entry name" value="G84686"/>
</dbReference>
<dbReference type="PIR" id="S66327">
    <property type="entry name" value="S66327"/>
</dbReference>
<dbReference type="RefSeq" id="NP_180426.1">
    <property type="nucleotide sequence ID" value="NM_128419.3"/>
</dbReference>
<dbReference type="SMR" id="Q9SIB6"/>
<dbReference type="FunCoup" id="Q9SIB6">
    <property type="interactions" value="599"/>
</dbReference>
<dbReference type="STRING" id="3702.Q9SIB6"/>
<dbReference type="PaxDb" id="3702-AT2G28590.1"/>
<dbReference type="ProteomicsDB" id="236795"/>
<dbReference type="EnsemblPlants" id="AT2G28590.1">
    <property type="protein sequence ID" value="AT2G28590.1"/>
    <property type="gene ID" value="AT2G28590"/>
</dbReference>
<dbReference type="GeneID" id="817407"/>
<dbReference type="Gramene" id="AT2G28590.1">
    <property type="protein sequence ID" value="AT2G28590.1"/>
    <property type="gene ID" value="AT2G28590"/>
</dbReference>
<dbReference type="KEGG" id="ath:AT2G28590"/>
<dbReference type="Araport" id="AT2G28590"/>
<dbReference type="TAIR" id="AT2G28590">
    <property type="gene designation" value="PBL6"/>
</dbReference>
<dbReference type="eggNOG" id="KOG1187">
    <property type="taxonomic scope" value="Eukaryota"/>
</dbReference>
<dbReference type="HOGENOM" id="CLU_000288_21_0_1"/>
<dbReference type="InParanoid" id="Q9SIB6"/>
<dbReference type="OMA" id="DHLASCN"/>
<dbReference type="PhylomeDB" id="Q9SIB6"/>
<dbReference type="PRO" id="PR:Q9SIB6"/>
<dbReference type="Proteomes" id="UP000006548">
    <property type="component" value="Chromosome 2"/>
</dbReference>
<dbReference type="ExpressionAtlas" id="Q9SIB6">
    <property type="expression patterns" value="baseline and differential"/>
</dbReference>
<dbReference type="GO" id="GO:0005886">
    <property type="term" value="C:plasma membrane"/>
    <property type="evidence" value="ECO:0007669"/>
    <property type="project" value="UniProtKB-SubCell"/>
</dbReference>
<dbReference type="GO" id="GO:0005524">
    <property type="term" value="F:ATP binding"/>
    <property type="evidence" value="ECO:0007669"/>
    <property type="project" value="UniProtKB-KW"/>
</dbReference>
<dbReference type="GO" id="GO:0106310">
    <property type="term" value="F:protein serine kinase activity"/>
    <property type="evidence" value="ECO:0007669"/>
    <property type="project" value="RHEA"/>
</dbReference>
<dbReference type="GO" id="GO:0004674">
    <property type="term" value="F:protein serine/threonine kinase activity"/>
    <property type="evidence" value="ECO:0007669"/>
    <property type="project" value="UniProtKB-KW"/>
</dbReference>
<dbReference type="GO" id="GO:0006952">
    <property type="term" value="P:defense response"/>
    <property type="evidence" value="ECO:0007669"/>
    <property type="project" value="UniProtKB-KW"/>
</dbReference>
<dbReference type="CDD" id="cd14066">
    <property type="entry name" value="STKc_IRAK"/>
    <property type="match status" value="1"/>
</dbReference>
<dbReference type="FunFam" id="3.30.200.20:FF:000266">
    <property type="entry name" value="probable serine/threonine-protein kinase RLCKVII"/>
    <property type="match status" value="1"/>
</dbReference>
<dbReference type="FunFam" id="1.10.510.10:FF:000032">
    <property type="entry name" value="Serine/threonine-protein kinase PBS1"/>
    <property type="match status" value="1"/>
</dbReference>
<dbReference type="Gene3D" id="3.30.200.20">
    <property type="entry name" value="Phosphorylase Kinase, domain 1"/>
    <property type="match status" value="1"/>
</dbReference>
<dbReference type="Gene3D" id="1.10.510.10">
    <property type="entry name" value="Transferase(Phosphotransferase) domain 1"/>
    <property type="match status" value="1"/>
</dbReference>
<dbReference type="InterPro" id="IPR011009">
    <property type="entry name" value="Kinase-like_dom_sf"/>
</dbReference>
<dbReference type="InterPro" id="IPR000719">
    <property type="entry name" value="Prot_kinase_dom"/>
</dbReference>
<dbReference type="InterPro" id="IPR017441">
    <property type="entry name" value="Protein_kinase_ATP_BS"/>
</dbReference>
<dbReference type="InterPro" id="IPR008271">
    <property type="entry name" value="Ser/Thr_kinase_AS"/>
</dbReference>
<dbReference type="PANTHER" id="PTHR47985">
    <property type="entry name" value="OS07G0668900 PROTEIN"/>
    <property type="match status" value="1"/>
</dbReference>
<dbReference type="PANTHER" id="PTHR47985:SF41">
    <property type="entry name" value="SERINE_THREONINE-PROTEIN KINASE PBL5-RELATED"/>
    <property type="match status" value="1"/>
</dbReference>
<dbReference type="Pfam" id="PF00069">
    <property type="entry name" value="Pkinase"/>
    <property type="match status" value="1"/>
</dbReference>
<dbReference type="SMART" id="SM00220">
    <property type="entry name" value="S_TKc"/>
    <property type="match status" value="1"/>
</dbReference>
<dbReference type="SUPFAM" id="SSF56112">
    <property type="entry name" value="Protein kinase-like (PK-like)"/>
    <property type="match status" value="1"/>
</dbReference>
<dbReference type="PROSITE" id="PS00107">
    <property type="entry name" value="PROTEIN_KINASE_ATP"/>
    <property type="match status" value="1"/>
</dbReference>
<dbReference type="PROSITE" id="PS50011">
    <property type="entry name" value="PROTEIN_KINASE_DOM"/>
    <property type="match status" value="1"/>
</dbReference>
<dbReference type="PROSITE" id="PS00108">
    <property type="entry name" value="PROTEIN_KINASE_ST"/>
    <property type="match status" value="1"/>
</dbReference>
<evidence type="ECO:0000250" key="1">
    <source>
        <dbReference type="UniProtKB" id="O48814"/>
    </source>
</evidence>
<evidence type="ECO:0000250" key="2">
    <source>
        <dbReference type="UniProtKB" id="Q9FE20"/>
    </source>
</evidence>
<evidence type="ECO:0000255" key="3">
    <source>
        <dbReference type="PROSITE-ProRule" id="PRU00159"/>
    </source>
</evidence>
<evidence type="ECO:0000256" key="4">
    <source>
        <dbReference type="SAM" id="MobiDB-lite"/>
    </source>
</evidence>
<evidence type="ECO:0000303" key="5">
    <source>
    </source>
</evidence>
<evidence type="ECO:0000303" key="6">
    <source>
    </source>
</evidence>
<evidence type="ECO:0000305" key="7"/>
<evidence type="ECO:0000312" key="8">
    <source>
        <dbReference type="Araport" id="AT2G28590"/>
    </source>
</evidence>
<proteinExistence type="evidence at transcript level"/>
<name>PBL6_ARATH</name>
<reference key="1">
    <citation type="journal article" date="1999" name="Nature">
        <title>Sequence and analysis of chromosome 2 of the plant Arabidopsis thaliana.</title>
        <authorList>
            <person name="Lin X."/>
            <person name="Kaul S."/>
            <person name="Rounsley S.D."/>
            <person name="Shea T.P."/>
            <person name="Benito M.-I."/>
            <person name="Town C.D."/>
            <person name="Fujii C.Y."/>
            <person name="Mason T.M."/>
            <person name="Bowman C.L."/>
            <person name="Barnstead M.E."/>
            <person name="Feldblyum T.V."/>
            <person name="Buell C.R."/>
            <person name="Ketchum K.A."/>
            <person name="Lee J.J."/>
            <person name="Ronning C.M."/>
            <person name="Koo H.L."/>
            <person name="Moffat K.S."/>
            <person name="Cronin L.A."/>
            <person name="Shen M."/>
            <person name="Pai G."/>
            <person name="Van Aken S."/>
            <person name="Umayam L."/>
            <person name="Tallon L.J."/>
            <person name="Gill J.E."/>
            <person name="Adams M.D."/>
            <person name="Carrera A.J."/>
            <person name="Creasy T.H."/>
            <person name="Goodman H.M."/>
            <person name="Somerville C.R."/>
            <person name="Copenhaver G.P."/>
            <person name="Preuss D."/>
            <person name="Nierman W.C."/>
            <person name="White O."/>
            <person name="Eisen J.A."/>
            <person name="Salzberg S.L."/>
            <person name="Fraser C.M."/>
            <person name="Venter J.C."/>
        </authorList>
    </citation>
    <scope>NUCLEOTIDE SEQUENCE [LARGE SCALE GENOMIC DNA]</scope>
    <source>
        <strain>cv. Columbia</strain>
    </source>
</reference>
<reference key="2">
    <citation type="journal article" date="2017" name="Plant J.">
        <title>Araport11: a complete reannotation of the Arabidopsis thaliana reference genome.</title>
        <authorList>
            <person name="Cheng C.Y."/>
            <person name="Krishnakumar V."/>
            <person name="Chan A.P."/>
            <person name="Thibaud-Nissen F."/>
            <person name="Schobel S."/>
            <person name="Town C.D."/>
        </authorList>
    </citation>
    <scope>GENOME REANNOTATION</scope>
    <source>
        <strain>cv. Columbia</strain>
    </source>
</reference>
<reference key="3">
    <citation type="submission" date="2006-12" db="EMBL/GenBank/DDBJ databases">
        <title>Arabidopsis ORF clones.</title>
        <authorList>
            <person name="Bautista V.R."/>
            <person name="Kim C.J."/>
            <person name="Chen H."/>
            <person name="Wu S.Y."/>
            <person name="De Los Reyes C."/>
            <person name="Ecker J.R."/>
        </authorList>
    </citation>
    <scope>NUCLEOTIDE SEQUENCE [LARGE SCALE MRNA]</scope>
    <source>
        <strain>cv. Columbia</strain>
    </source>
</reference>
<reference key="4">
    <citation type="journal article" date="1995" name="Plant Mol. Biol.">
        <title>Differential accumulation of the transcripts of 22 novel protein kinase genes in Arabidopsis thaliana.</title>
        <authorList>
            <person name="Thuemmler F."/>
            <person name="Kirchner M."/>
            <person name="Teuber R."/>
            <person name="Dittrich P."/>
        </authorList>
    </citation>
    <scope>NUCLEOTIDE SEQUENCE [GENOMIC DNA] OF 227-283</scope>
    <source>
        <strain>cv. Eil-0</strain>
        <tissue>Leaf</tissue>
    </source>
</reference>
<reference key="5">
    <citation type="journal article" date="2010" name="Cell Host Microbe">
        <title>Receptor-like cytoplasmic kinases integrate signaling from multiple plant immune receptors and are targeted by a Pseudomonas syringae effector.</title>
        <authorList>
            <person name="Zhang J."/>
            <person name="Li W."/>
            <person name="Xiang T."/>
            <person name="Liu Z."/>
            <person name="Laluk K."/>
            <person name="Ding X."/>
            <person name="Zou Y."/>
            <person name="Gao M."/>
            <person name="Zhang X."/>
            <person name="Chen S."/>
            <person name="Mengiste T."/>
            <person name="Zhang Y."/>
            <person name="Zhou J.M."/>
        </authorList>
    </citation>
    <scope>GENE FAMILY</scope>
    <scope>NOMENCLATURE</scope>
</reference>
<feature type="initiator methionine" description="Removed" evidence="7">
    <location>
        <position position="1"/>
    </location>
</feature>
<feature type="chain" id="PRO_0000438606" description="Probable serine/threonine-protein kinase PBL6">
    <location>
        <begin position="2"/>
        <end position="424"/>
    </location>
</feature>
<feature type="domain" description="Protein kinase" evidence="3">
    <location>
        <begin position="98"/>
        <end position="377"/>
    </location>
</feature>
<feature type="region of interest" description="Disordered" evidence="4">
    <location>
        <begin position="1"/>
        <end position="26"/>
    </location>
</feature>
<feature type="active site" description="Proton acceptor" evidence="3">
    <location>
        <position position="225"/>
    </location>
</feature>
<feature type="binding site" evidence="3">
    <location>
        <begin position="104"/>
        <end position="112"/>
    </location>
    <ligand>
        <name>ATP</name>
        <dbReference type="ChEBI" id="CHEBI:30616"/>
    </ligand>
</feature>
<feature type="binding site" evidence="3">
    <location>
        <position position="127"/>
    </location>
    <ligand>
        <name>ATP</name>
        <dbReference type="ChEBI" id="CHEBI:30616"/>
    </ligand>
</feature>
<feature type="modified residue" description="Phosphothreonine" evidence="1">
    <location>
        <position position="87"/>
    </location>
</feature>
<feature type="modified residue" description="Phosphotyrosine" evidence="1">
    <location>
        <position position="172"/>
    </location>
</feature>
<feature type="modified residue" description="Phosphoserine" evidence="1">
    <location>
        <position position="229"/>
    </location>
</feature>
<feature type="modified residue" description="Phosphoserine" evidence="1">
    <location>
        <position position="259"/>
    </location>
</feature>
<feature type="modified residue" description="Phosphothreonine" evidence="1">
    <location>
        <position position="260"/>
    </location>
</feature>
<feature type="modified residue" description="Phosphothreonine" evidence="1">
    <location>
        <position position="265"/>
    </location>
</feature>
<feature type="modified residue" description="Phosphotyrosine" evidence="1">
    <location>
        <position position="273"/>
    </location>
</feature>
<feature type="lipid moiety-binding region" description="N-myristoyl glycine" evidence="2">
    <location>
        <position position="2"/>
    </location>
</feature>
<feature type="lipid moiety-binding region" description="S-palmitoyl cysteine" evidence="2">
    <location>
        <position position="3"/>
    </location>
</feature>
<feature type="sequence conflict" description="In Ref. 4; CAA60522." evidence="7" ref="4">
    <original>T</original>
    <variation>A</variation>
    <location>
        <position position="280"/>
    </location>
</feature>
<accession>Q9SIB6</accession>
<accession>Q38979</accession>
<sequence length="424" mass="47279">MGCFGRTPKSNKRSDTKTTKNNDFTPKKLTVNANRDKLTQPSSDCLKVSICGDVSKEIVTKKDQLALDAKDTNVEDEVIVKKAQTFTFEELSVSTGNFKSDCFLGEGGFGKVYKGFIEKINQVVAIKQLDRNGAQGIREFVVEVLTLSLADHPNLVKLIGFCAEGVQRLLVYEYMPLGSLDNHLHDLPSGKNPLAWNTRMKIAAGAARGLEYLHDTMKPPVIYRDLKCSNILIDEGYHAKLSDFGLAKVGPRGSETHVSTRVMGTYGYCAPDYALTGQLTFKSDVYSFGVVLLELITGRKAYDNTRTRNHQSLVEWANPLFKDRKNFKKMVDPLLEGDYPVRGLYQALAIAAMCVQEQPSMRPVIADVVMALDHLASSKYDRSHRQKQDNVTETKVDEEKTLTTESNVCVEEKQEIKICSDQAT</sequence>
<protein>
    <recommendedName>
        <fullName evidence="7">Probable serine/threonine-protein kinase PBL6</fullName>
        <ecNumber evidence="7">2.7.11.1</ecNumber>
    </recommendedName>
    <alternativeName>
        <fullName evidence="5">PBS1-like protein 6</fullName>
    </alternativeName>
</protein>
<comment type="function">
    <text evidence="1">May be involved in plant defense signaling.</text>
</comment>
<comment type="catalytic activity">
    <reaction evidence="7">
        <text>L-seryl-[protein] + ATP = O-phospho-L-seryl-[protein] + ADP + H(+)</text>
        <dbReference type="Rhea" id="RHEA:17989"/>
        <dbReference type="Rhea" id="RHEA-COMP:9863"/>
        <dbReference type="Rhea" id="RHEA-COMP:11604"/>
        <dbReference type="ChEBI" id="CHEBI:15378"/>
        <dbReference type="ChEBI" id="CHEBI:29999"/>
        <dbReference type="ChEBI" id="CHEBI:30616"/>
        <dbReference type="ChEBI" id="CHEBI:83421"/>
        <dbReference type="ChEBI" id="CHEBI:456216"/>
        <dbReference type="EC" id="2.7.11.1"/>
    </reaction>
</comment>
<comment type="catalytic activity">
    <reaction evidence="7">
        <text>L-threonyl-[protein] + ATP = O-phospho-L-threonyl-[protein] + ADP + H(+)</text>
        <dbReference type="Rhea" id="RHEA:46608"/>
        <dbReference type="Rhea" id="RHEA-COMP:11060"/>
        <dbReference type="Rhea" id="RHEA-COMP:11605"/>
        <dbReference type="ChEBI" id="CHEBI:15378"/>
        <dbReference type="ChEBI" id="CHEBI:30013"/>
        <dbReference type="ChEBI" id="CHEBI:30616"/>
        <dbReference type="ChEBI" id="CHEBI:61977"/>
        <dbReference type="ChEBI" id="CHEBI:456216"/>
        <dbReference type="EC" id="2.7.11.1"/>
    </reaction>
</comment>
<comment type="subcellular location">
    <subcellularLocation>
        <location evidence="1">Cell membrane</location>
        <topology evidence="1">Lipid-anchor</topology>
    </subcellularLocation>
</comment>
<comment type="similarity">
    <text evidence="3">Belongs to the protein kinase superfamily. Ser/Thr protein kinase family.</text>
</comment>
<gene>
    <name evidence="5" type="primary">PBL6</name>
    <name evidence="6" type="synonym">AK14</name>
    <name evidence="8" type="ordered locus">At2g28590</name>
</gene>